<name>MURI_ALIB4</name>
<gene>
    <name evidence="1" type="primary">murI</name>
    <name type="ordered locus">Abu_0286</name>
</gene>
<comment type="function">
    <text evidence="1">Provides the (R)-glutamate required for cell wall biosynthesis.</text>
</comment>
<comment type="catalytic activity">
    <reaction evidence="1">
        <text>L-glutamate = D-glutamate</text>
        <dbReference type="Rhea" id="RHEA:12813"/>
        <dbReference type="ChEBI" id="CHEBI:29985"/>
        <dbReference type="ChEBI" id="CHEBI:29986"/>
        <dbReference type="EC" id="5.1.1.3"/>
    </reaction>
</comment>
<comment type="pathway">
    <text evidence="1">Cell wall biogenesis; peptidoglycan biosynthesis.</text>
</comment>
<comment type="similarity">
    <text evidence="1">Belongs to the aspartate/glutamate racemases family.</text>
</comment>
<protein>
    <recommendedName>
        <fullName evidence="1">Glutamate racemase</fullName>
        <ecNumber evidence="1">5.1.1.3</ecNumber>
    </recommendedName>
</protein>
<feature type="chain" id="PRO_1000078551" description="Glutamate racemase">
    <location>
        <begin position="1"/>
        <end position="261"/>
    </location>
</feature>
<feature type="active site" description="Proton donor/acceptor" evidence="1">
    <location>
        <position position="71"/>
    </location>
</feature>
<feature type="active site" description="Proton donor/acceptor" evidence="1">
    <location>
        <position position="184"/>
    </location>
</feature>
<feature type="binding site" evidence="1">
    <location>
        <begin position="7"/>
        <end position="8"/>
    </location>
    <ligand>
        <name>substrate</name>
    </ligand>
</feature>
<feature type="binding site" evidence="1">
    <location>
        <begin position="39"/>
        <end position="40"/>
    </location>
    <ligand>
        <name>substrate</name>
    </ligand>
</feature>
<feature type="binding site" evidence="1">
    <location>
        <begin position="72"/>
        <end position="73"/>
    </location>
    <ligand>
        <name>substrate</name>
    </ligand>
</feature>
<feature type="binding site" evidence="1">
    <location>
        <begin position="185"/>
        <end position="186"/>
    </location>
    <ligand>
        <name>substrate</name>
    </ligand>
</feature>
<keyword id="KW-0133">Cell shape</keyword>
<keyword id="KW-0961">Cell wall biogenesis/degradation</keyword>
<keyword id="KW-0413">Isomerase</keyword>
<keyword id="KW-0573">Peptidoglycan synthesis</keyword>
<keyword id="KW-1185">Reference proteome</keyword>
<reference key="1">
    <citation type="journal article" date="2007" name="PLoS ONE">
        <title>The complete genome sequence and analysis of the Epsilonproteobacterium Arcobacter butzleri.</title>
        <authorList>
            <person name="Miller W.G."/>
            <person name="Parker C.T."/>
            <person name="Rubenfield M."/>
            <person name="Mendz G.L."/>
            <person name="Woesten M.M.S.M."/>
            <person name="Ussery D.W."/>
            <person name="Stolz J.F."/>
            <person name="Binnewies T.T."/>
            <person name="Hallin P.F."/>
            <person name="Wang G."/>
            <person name="Malek J.A."/>
            <person name="Rogosin A."/>
            <person name="Stanker L.H."/>
            <person name="Mandrell R.E."/>
        </authorList>
    </citation>
    <scope>NUCLEOTIDE SEQUENCE [LARGE SCALE GENOMIC DNA]</scope>
    <source>
        <strain>RM4018</strain>
    </source>
</reference>
<organism>
    <name type="scientific">Aliarcobacter butzleri (strain RM4018)</name>
    <name type="common">Arcobacter butzleri</name>
    <dbReference type="NCBI Taxonomy" id="367737"/>
    <lineage>
        <taxon>Bacteria</taxon>
        <taxon>Pseudomonadati</taxon>
        <taxon>Campylobacterota</taxon>
        <taxon>Epsilonproteobacteria</taxon>
        <taxon>Campylobacterales</taxon>
        <taxon>Arcobacteraceae</taxon>
        <taxon>Aliarcobacter</taxon>
    </lineage>
</organism>
<evidence type="ECO:0000255" key="1">
    <source>
        <dbReference type="HAMAP-Rule" id="MF_00258"/>
    </source>
</evidence>
<accession>A8ERI7</accession>
<proteinExistence type="inferred from homology"/>
<sequence>MKVGVFDSGLGGLTVLKSILKVLKNAEIFYIADTAYAPYGEKDSALILKRCEDITNYLLKEYKIDALIVACNTATSAAIKHLRDNFSSLIVIGTEPGIKPAILNTKSSNIGILATPSTLKSDKYQLLVNELSSIKKVNLFEQACPGLAMQIEKGEINTLTTYKMLEEWLIPMKEANVDTIVLGCTHYPLISQTIKKIMGEDITLIQTGDAIAKRLLSLSEEKGHKNIGDLKVTVLHTGLINLDMIENILENKNIEVRKCEI</sequence>
<dbReference type="EC" id="5.1.1.3" evidence="1"/>
<dbReference type="EMBL" id="CP000361">
    <property type="protein sequence ID" value="ABV66561.1"/>
    <property type="molecule type" value="Genomic_DNA"/>
</dbReference>
<dbReference type="RefSeq" id="WP_012012139.1">
    <property type="nucleotide sequence ID" value="NC_009850.1"/>
</dbReference>
<dbReference type="SMR" id="A8ERI7"/>
<dbReference type="STRING" id="367737.Abu_0286"/>
<dbReference type="GeneID" id="24304201"/>
<dbReference type="KEGG" id="abu:Abu_0286"/>
<dbReference type="eggNOG" id="COG0796">
    <property type="taxonomic scope" value="Bacteria"/>
</dbReference>
<dbReference type="HOGENOM" id="CLU_052344_1_0_7"/>
<dbReference type="UniPathway" id="UPA00219"/>
<dbReference type="Proteomes" id="UP000001136">
    <property type="component" value="Chromosome"/>
</dbReference>
<dbReference type="GO" id="GO:0008881">
    <property type="term" value="F:glutamate racemase activity"/>
    <property type="evidence" value="ECO:0007669"/>
    <property type="project" value="UniProtKB-UniRule"/>
</dbReference>
<dbReference type="GO" id="GO:0071555">
    <property type="term" value="P:cell wall organization"/>
    <property type="evidence" value="ECO:0007669"/>
    <property type="project" value="UniProtKB-KW"/>
</dbReference>
<dbReference type="GO" id="GO:0009252">
    <property type="term" value="P:peptidoglycan biosynthetic process"/>
    <property type="evidence" value="ECO:0007669"/>
    <property type="project" value="UniProtKB-UniRule"/>
</dbReference>
<dbReference type="GO" id="GO:0008360">
    <property type="term" value="P:regulation of cell shape"/>
    <property type="evidence" value="ECO:0007669"/>
    <property type="project" value="UniProtKB-KW"/>
</dbReference>
<dbReference type="FunFam" id="3.40.50.1860:FF:000001">
    <property type="entry name" value="Glutamate racemase"/>
    <property type="match status" value="1"/>
</dbReference>
<dbReference type="Gene3D" id="3.40.50.1860">
    <property type="match status" value="2"/>
</dbReference>
<dbReference type="HAMAP" id="MF_00258">
    <property type="entry name" value="Glu_racemase"/>
    <property type="match status" value="1"/>
</dbReference>
<dbReference type="InterPro" id="IPR015942">
    <property type="entry name" value="Asp/Glu/hydantoin_racemase"/>
</dbReference>
<dbReference type="InterPro" id="IPR001920">
    <property type="entry name" value="Asp/Glu_race"/>
</dbReference>
<dbReference type="InterPro" id="IPR018187">
    <property type="entry name" value="Asp/Glu_racemase_AS_1"/>
</dbReference>
<dbReference type="InterPro" id="IPR033134">
    <property type="entry name" value="Asp/Glu_racemase_AS_2"/>
</dbReference>
<dbReference type="InterPro" id="IPR004391">
    <property type="entry name" value="Glu_race"/>
</dbReference>
<dbReference type="NCBIfam" id="TIGR00067">
    <property type="entry name" value="glut_race"/>
    <property type="match status" value="1"/>
</dbReference>
<dbReference type="PANTHER" id="PTHR21198">
    <property type="entry name" value="GLUTAMATE RACEMASE"/>
    <property type="match status" value="1"/>
</dbReference>
<dbReference type="PANTHER" id="PTHR21198:SF3">
    <property type="entry name" value="GLUTAMATE RACEMASE"/>
    <property type="match status" value="1"/>
</dbReference>
<dbReference type="Pfam" id="PF01177">
    <property type="entry name" value="Asp_Glu_race"/>
    <property type="match status" value="1"/>
</dbReference>
<dbReference type="SUPFAM" id="SSF53681">
    <property type="entry name" value="Aspartate/glutamate racemase"/>
    <property type="match status" value="2"/>
</dbReference>
<dbReference type="PROSITE" id="PS00923">
    <property type="entry name" value="ASP_GLU_RACEMASE_1"/>
    <property type="match status" value="1"/>
</dbReference>
<dbReference type="PROSITE" id="PS00924">
    <property type="entry name" value="ASP_GLU_RACEMASE_2"/>
    <property type="match status" value="1"/>
</dbReference>